<accession>Q9Y7L4</accession>
<accession>A0AAN2H839</accession>
<keyword id="KW-0004">4Fe-4S</keyword>
<keyword id="KW-0024">Alternative initiation</keyword>
<keyword id="KW-0963">Cytoplasm</keyword>
<keyword id="KW-0238">DNA-binding</keyword>
<keyword id="KW-0269">Exonuclease</keyword>
<keyword id="KW-0378">Hydrolase</keyword>
<keyword id="KW-0408">Iron</keyword>
<keyword id="KW-0411">Iron-sulfur</keyword>
<keyword id="KW-0460">Magnesium</keyword>
<keyword id="KW-0479">Metal-binding</keyword>
<keyword id="KW-0496">Mitochondrion</keyword>
<keyword id="KW-0540">Nuclease</keyword>
<keyword id="KW-0539">Nucleus</keyword>
<keyword id="KW-1185">Reference proteome</keyword>
<reference key="1">
    <citation type="journal article" date="2002" name="Nature">
        <title>The genome sequence of Schizosaccharomyces pombe.</title>
        <authorList>
            <person name="Wood V."/>
            <person name="Gwilliam R."/>
            <person name="Rajandream M.A."/>
            <person name="Lyne M.H."/>
            <person name="Lyne R."/>
            <person name="Stewart A."/>
            <person name="Sgouros J.G."/>
            <person name="Peat N."/>
            <person name="Hayles J."/>
            <person name="Baker S.G."/>
            <person name="Basham D."/>
            <person name="Bowman S."/>
            <person name="Brooks K."/>
            <person name="Brown D."/>
            <person name="Brown S."/>
            <person name="Chillingworth T."/>
            <person name="Churcher C.M."/>
            <person name="Collins M."/>
            <person name="Connor R."/>
            <person name="Cronin A."/>
            <person name="Davis P."/>
            <person name="Feltwell T."/>
            <person name="Fraser A."/>
            <person name="Gentles S."/>
            <person name="Goble A."/>
            <person name="Hamlin N."/>
            <person name="Harris D.E."/>
            <person name="Hidalgo J."/>
            <person name="Hodgson G."/>
            <person name="Holroyd S."/>
            <person name="Hornsby T."/>
            <person name="Howarth S."/>
            <person name="Huckle E.J."/>
            <person name="Hunt S."/>
            <person name="Jagels K."/>
            <person name="James K.D."/>
            <person name="Jones L."/>
            <person name="Jones M."/>
            <person name="Leather S."/>
            <person name="McDonald S."/>
            <person name="McLean J."/>
            <person name="Mooney P."/>
            <person name="Moule S."/>
            <person name="Mungall K.L."/>
            <person name="Murphy L.D."/>
            <person name="Niblett D."/>
            <person name="Odell C."/>
            <person name="Oliver K."/>
            <person name="O'Neil S."/>
            <person name="Pearson D."/>
            <person name="Quail M.A."/>
            <person name="Rabbinowitsch E."/>
            <person name="Rutherford K.M."/>
            <person name="Rutter S."/>
            <person name="Saunders D."/>
            <person name="Seeger K."/>
            <person name="Sharp S."/>
            <person name="Skelton J."/>
            <person name="Simmonds M.N."/>
            <person name="Squares R."/>
            <person name="Squares S."/>
            <person name="Stevens K."/>
            <person name="Taylor K."/>
            <person name="Taylor R.G."/>
            <person name="Tivey A."/>
            <person name="Walsh S.V."/>
            <person name="Warren T."/>
            <person name="Whitehead S."/>
            <person name="Woodward J.R."/>
            <person name="Volckaert G."/>
            <person name="Aert R."/>
            <person name="Robben J."/>
            <person name="Grymonprez B."/>
            <person name="Weltjens I."/>
            <person name="Vanstreels E."/>
            <person name="Rieger M."/>
            <person name="Schaefer M."/>
            <person name="Mueller-Auer S."/>
            <person name="Gabel C."/>
            <person name="Fuchs M."/>
            <person name="Duesterhoeft A."/>
            <person name="Fritzc C."/>
            <person name="Holzer E."/>
            <person name="Moestl D."/>
            <person name="Hilbert H."/>
            <person name="Borzym K."/>
            <person name="Langer I."/>
            <person name="Beck A."/>
            <person name="Lehrach H."/>
            <person name="Reinhardt R."/>
            <person name="Pohl T.M."/>
            <person name="Eger P."/>
            <person name="Zimmermann W."/>
            <person name="Wedler H."/>
            <person name="Wambutt R."/>
            <person name="Purnelle B."/>
            <person name="Goffeau A."/>
            <person name="Cadieu E."/>
            <person name="Dreano S."/>
            <person name="Gloux S."/>
            <person name="Lelaure V."/>
            <person name="Mottier S."/>
            <person name="Galibert F."/>
            <person name="Aves S.J."/>
            <person name="Xiang Z."/>
            <person name="Hunt C."/>
            <person name="Moore K."/>
            <person name="Hurst S.M."/>
            <person name="Lucas M."/>
            <person name="Rochet M."/>
            <person name="Gaillardin C."/>
            <person name="Tallada V.A."/>
            <person name="Garzon A."/>
            <person name="Thode G."/>
            <person name="Daga R.R."/>
            <person name="Cruzado L."/>
            <person name="Jimenez J."/>
            <person name="Sanchez M."/>
            <person name="del Rey F."/>
            <person name="Benito J."/>
            <person name="Dominguez A."/>
            <person name="Revuelta J.L."/>
            <person name="Moreno S."/>
            <person name="Armstrong J."/>
            <person name="Forsburg S.L."/>
            <person name="Cerutti L."/>
            <person name="Lowe T."/>
            <person name="McCombie W.R."/>
            <person name="Paulsen I."/>
            <person name="Potashkin J."/>
            <person name="Shpakovski G.V."/>
            <person name="Ussery D."/>
            <person name="Barrell B.G."/>
            <person name="Nurse P."/>
        </authorList>
    </citation>
    <scope>NUCLEOTIDE SEQUENCE [LARGE SCALE GENOMIC DNA] (ISOFORMS 1 AND 2)</scope>
    <source>
        <strain>972 / ATCC 24843</strain>
    </source>
</reference>
<reference key="2">
    <citation type="journal article" date="2006" name="Nat. Biotechnol.">
        <title>ORFeome cloning and global analysis of protein localization in the fission yeast Schizosaccharomyces pombe.</title>
        <authorList>
            <person name="Matsuyama A."/>
            <person name="Arai R."/>
            <person name="Yashiroda Y."/>
            <person name="Shirai A."/>
            <person name="Kamata A."/>
            <person name="Sekido S."/>
            <person name="Kobayashi Y."/>
            <person name="Hashimoto A."/>
            <person name="Hamamoto M."/>
            <person name="Hiraoka Y."/>
            <person name="Horinouchi S."/>
            <person name="Yoshida M."/>
        </authorList>
    </citation>
    <scope>SUBCELLULAR LOCATION [LARGE SCALE ANALYSIS]</scope>
</reference>
<reference key="3">
    <citation type="journal article" date="2019" name="DNA Repair">
        <title>The roles of fission yeast exonuclease 5 in nuclear and mitochondrial genome stability.</title>
        <authorList>
            <person name="Sparks J.L."/>
            <person name="Gerik K.J."/>
            <person name="Stith C.M."/>
            <person name="Yoder B.L."/>
            <person name="Burgers P.M."/>
        </authorList>
    </citation>
    <scope>FUNCTION</scope>
    <scope>CATALYTIC ACTIVITY</scope>
    <scope>BIOPHYSICOCHEMICAL PROPERTIES</scope>
    <scope>COFACTOR</scope>
    <scope>SUBCELLULAR LOCATION</scope>
    <scope>MUTAGENESIS OF ASP-176 AND ASP-207</scope>
    <scope>ALTERNATIVE INITIATION</scope>
</reference>
<feature type="chain" id="PRO_0000116758" description="Exonuclease V">
    <location>
        <begin position="1"/>
        <end position="409"/>
    </location>
</feature>
<feature type="binding site" evidence="1">
    <location>
        <position position="86"/>
    </location>
    <ligand>
        <name>[4Fe-4S] cluster</name>
        <dbReference type="ChEBI" id="CHEBI:49883"/>
    </ligand>
</feature>
<feature type="binding site" evidence="1">
    <location>
        <position position="176"/>
    </location>
    <ligand>
        <name>Mg(2+)</name>
        <dbReference type="ChEBI" id="CHEBI:18420"/>
    </ligand>
</feature>
<feature type="binding site" evidence="1">
    <location>
        <position position="207"/>
    </location>
    <ligand>
        <name>Mg(2+)</name>
        <dbReference type="ChEBI" id="CHEBI:18420"/>
    </ligand>
</feature>
<feature type="binding site" evidence="1">
    <location>
        <position position="386"/>
    </location>
    <ligand>
        <name>[4Fe-4S] cluster</name>
        <dbReference type="ChEBI" id="CHEBI:49883"/>
    </ligand>
</feature>
<feature type="binding site" evidence="1">
    <location>
        <position position="389"/>
    </location>
    <ligand>
        <name>[4Fe-4S] cluster</name>
        <dbReference type="ChEBI" id="CHEBI:49883"/>
    </ligand>
</feature>
<feature type="binding site" evidence="1">
    <location>
        <position position="395"/>
    </location>
    <ligand>
        <name>[4Fe-4S] cluster</name>
        <dbReference type="ChEBI" id="CHEBI:49883"/>
    </ligand>
</feature>
<feature type="splice variant" id="VSP_062512" description="In isoform 2.">
    <location>
        <begin position="1"/>
        <end position="57"/>
    </location>
</feature>
<feature type="mutagenesis site" description="Impairs exonuclease activity." evidence="3">
    <original>D</original>
    <variation>A</variation>
    <location>
        <position position="176"/>
    </location>
</feature>
<feature type="mutagenesis site" description="Impairs exonuclease activity." evidence="3">
    <original>D</original>
    <variation>A</variation>
    <location>
        <position position="207"/>
    </location>
</feature>
<evidence type="ECO:0000250" key="1">
    <source>
        <dbReference type="UniProtKB" id="Q9H790"/>
    </source>
</evidence>
<evidence type="ECO:0000269" key="2">
    <source>
    </source>
</evidence>
<evidence type="ECO:0000269" key="3">
    <source>
    </source>
</evidence>
<evidence type="ECO:0000305" key="4"/>
<evidence type="ECO:0000312" key="5">
    <source>
        <dbReference type="PomBase" id="SPBC685.02"/>
    </source>
</evidence>
<name>EXO5_SCHPO</name>
<comment type="function">
    <molecule>Exonuclease V</molecule>
    <text evidence="3">Single-stranded DNA (ssDNA) bidirectional exonuclease involved in DNA repair. Probably involved in DNA repair following ultraviolet (UV) irradiation and interstrand cross-links (ICLs) damage. Has both 5'-3' and 3'-5' exonuclease activities with a strong preference for 5'-ends. Acts as a sliding exonuclease that loads at ssDNA ends and then slides along the ssDNA prior to cutting; however the sliding and the 3'-5' exonuclease activities are abolished upon binding to the replication protein A (RPA) complex that enforces 5'-directionality activity.</text>
</comment>
<comment type="function">
    <molecule>Isoform 2</molecule>
    <text evidence="3">Plays a redundant role with the flap endonuclease FEN1/rad2 for the maintenance of mitochondrial DNA.</text>
</comment>
<comment type="cofactor">
    <cofactor evidence="1">
        <name>Mg(2+)</name>
        <dbReference type="ChEBI" id="CHEBI:18420"/>
    </cofactor>
</comment>
<comment type="cofactor">
    <cofactor evidence="3">
        <name>[4Fe-4S] cluster</name>
        <dbReference type="ChEBI" id="CHEBI:49883"/>
    </cofactor>
    <text evidence="3">Binds 1 [4Fe-4S] cluster.</text>
</comment>
<comment type="biophysicochemical properties">
    <molecule>Exonuclease V</molecule>
    <kinetics>
        <KM evidence="3">26 nM for a 34-mer ssDNA</KM>
        <text evidence="3">kcat is 1 sec(-1) with a 34-mer ssDNA as substrate.</text>
    </kinetics>
</comment>
<comment type="subunit">
    <text evidence="1">Monomer.</text>
</comment>
<comment type="subcellular location">
    <molecule>Isoform 1</molecule>
    <subcellularLocation>
        <location evidence="2">Cytoplasm</location>
    </subcellularLocation>
    <subcellularLocation>
        <location evidence="2 3">Nucleus</location>
    </subcellularLocation>
</comment>
<comment type="subcellular location">
    <molecule>Isoform 2</molecule>
    <subcellularLocation>
        <location evidence="3">Mitochondrion</location>
    </subcellularLocation>
</comment>
<comment type="alternative products">
    <event type="alternative initiation"/>
    <isoform>
        <id>Q9Y7L4-1</id>
        <name>1</name>
        <name>Exo5.1</name>
        <sequence type="displayed"/>
    </isoform>
    <isoform>
        <id>Q9Y7L4-2</id>
        <name>2</name>
        <name>Exo5.2</name>
        <sequence type="described" ref="VSP_062512"/>
    </isoform>
</comment>
<comment type="similarity">
    <text evidence="4">Belongs to the EXO5 family.</text>
</comment>
<protein>
    <recommendedName>
        <fullName>Exonuclease V</fullName>
        <shortName>Exo V</shortName>
        <ecNumber>3.1.-.-</ecNumber>
    </recommendedName>
</protein>
<sequence length="409" mass="48395">MEEYEDFEMEDLSELVSYMDYLETQRLTISQLDYSLSIPPQLLVSREISKLEDEVCEMLKESSLFQLFRKHKGYLNVTDLVLPLWCEVQHEYYLLRRIKKKTPKMERGIKLHQILEYETSPPSERRVLDRTSKEEPWALRLLRQLEGIMLLQKNGITREFPIWGYYKESSIFGIIDEISLNNPSKSNFNSDIRNYFNFKMYDLSFVDNKTRFSSRKPGASQILSSKVQLMYYVHLFLNYFPSLGEKQQSIFRDISPTYSNRLHSQSHWWNMFLSQLSLDGTKDLGPKFLEQSILSIPDIPEDVFAGHNSLNGLYALVFASAKKLHLRLTDDNLTIAYRNDKTGEVVYKDKFSFSNKLLEASYTKAYQFWHNLREPEGVPAEEVYKCRSCEFQKECWWLKKKQYYPLSSP</sequence>
<dbReference type="EC" id="3.1.-.-"/>
<dbReference type="EMBL" id="CU329671">
    <property type="protein sequence ID" value="CAB39359.1"/>
    <property type="molecule type" value="Genomic_DNA"/>
</dbReference>
<dbReference type="EMBL" id="CU329671">
    <property type="protein sequence ID" value="CAK9840445.1"/>
    <property type="molecule type" value="Genomic_DNA"/>
</dbReference>
<dbReference type="PIR" id="T40633">
    <property type="entry name" value="T40633"/>
</dbReference>
<dbReference type="RefSeq" id="NP_596136.1">
    <property type="nucleotide sequence ID" value="NM_001022054.2"/>
</dbReference>
<dbReference type="SMR" id="Q9Y7L4"/>
<dbReference type="BioGRID" id="277620">
    <property type="interactions" value="17"/>
</dbReference>
<dbReference type="FunCoup" id="Q9Y7L4">
    <property type="interactions" value="297"/>
</dbReference>
<dbReference type="PaxDb" id="4896-SPBC685.02.1"/>
<dbReference type="EnsemblFungi" id="SPBC685.02.1">
    <molecule id="Q9Y7L4-1"/>
    <property type="protein sequence ID" value="SPBC685.02.1:pep"/>
    <property type="gene ID" value="SPBC685.02"/>
</dbReference>
<dbReference type="GeneID" id="2541105"/>
<dbReference type="KEGG" id="spo:2541105"/>
<dbReference type="PomBase" id="SPBC685.02">
    <property type="gene designation" value="exo5"/>
</dbReference>
<dbReference type="VEuPathDB" id="FungiDB:SPBC685.02"/>
<dbReference type="eggNOG" id="KOG4760">
    <property type="taxonomic scope" value="Eukaryota"/>
</dbReference>
<dbReference type="HOGENOM" id="CLU_013225_0_2_1"/>
<dbReference type="InParanoid" id="Q9Y7L4"/>
<dbReference type="OMA" id="CPDKPLG"/>
<dbReference type="PhylomeDB" id="Q9Y7L4"/>
<dbReference type="PRO" id="PR:Q9Y7L4"/>
<dbReference type="Proteomes" id="UP000002485">
    <property type="component" value="Chromosome II"/>
</dbReference>
<dbReference type="GO" id="GO:0005739">
    <property type="term" value="C:mitochondrion"/>
    <property type="evidence" value="ECO:0000314"/>
    <property type="project" value="PomBase"/>
</dbReference>
<dbReference type="GO" id="GO:0005634">
    <property type="term" value="C:nucleus"/>
    <property type="evidence" value="ECO:0000314"/>
    <property type="project" value="PomBase"/>
</dbReference>
<dbReference type="GO" id="GO:0051539">
    <property type="term" value="F:4 iron, 4 sulfur cluster binding"/>
    <property type="evidence" value="ECO:0007669"/>
    <property type="project" value="UniProtKB-KW"/>
</dbReference>
<dbReference type="GO" id="GO:0003677">
    <property type="term" value="F:DNA binding"/>
    <property type="evidence" value="ECO:0000305"/>
    <property type="project" value="PomBase"/>
</dbReference>
<dbReference type="GO" id="GO:0046872">
    <property type="term" value="F:metal ion binding"/>
    <property type="evidence" value="ECO:0007669"/>
    <property type="project" value="UniProtKB-KW"/>
</dbReference>
<dbReference type="GO" id="GO:0045145">
    <property type="term" value="F:single-stranded DNA 5'-3' DNA exonuclease activity"/>
    <property type="evidence" value="ECO:0007669"/>
    <property type="project" value="InterPro"/>
</dbReference>
<dbReference type="GO" id="GO:0036297">
    <property type="term" value="P:interstrand cross-link repair"/>
    <property type="evidence" value="ECO:0000318"/>
    <property type="project" value="GO_Central"/>
</dbReference>
<dbReference type="GO" id="GO:0032042">
    <property type="term" value="P:mitochondrial DNA metabolic process"/>
    <property type="evidence" value="ECO:0000316"/>
    <property type="project" value="PomBase"/>
</dbReference>
<dbReference type="GO" id="GO:0036298">
    <property type="term" value="P:recombinational interstrand cross-link repair"/>
    <property type="evidence" value="ECO:0000316"/>
    <property type="project" value="PomBase"/>
</dbReference>
<dbReference type="InterPro" id="IPR019190">
    <property type="entry name" value="EXOV"/>
</dbReference>
<dbReference type="PANTHER" id="PTHR14464">
    <property type="entry name" value="EXONUCLEASE V"/>
    <property type="match status" value="1"/>
</dbReference>
<dbReference type="PANTHER" id="PTHR14464:SF4">
    <property type="entry name" value="EXONUCLEASE V"/>
    <property type="match status" value="1"/>
</dbReference>
<dbReference type="Pfam" id="PF09810">
    <property type="entry name" value="Exo5"/>
    <property type="match status" value="1"/>
</dbReference>
<gene>
    <name type="primary">exo5</name>
    <name evidence="5" type="ORF">SPBC685.02</name>
</gene>
<proteinExistence type="evidence at protein level"/>
<organism>
    <name type="scientific">Schizosaccharomyces pombe (strain 972 / ATCC 24843)</name>
    <name type="common">Fission yeast</name>
    <dbReference type="NCBI Taxonomy" id="284812"/>
    <lineage>
        <taxon>Eukaryota</taxon>
        <taxon>Fungi</taxon>
        <taxon>Dikarya</taxon>
        <taxon>Ascomycota</taxon>
        <taxon>Taphrinomycotina</taxon>
        <taxon>Schizosaccharomycetes</taxon>
        <taxon>Schizosaccharomycetales</taxon>
        <taxon>Schizosaccharomycetaceae</taxon>
        <taxon>Schizosaccharomyces</taxon>
    </lineage>
</organism>